<organism>
    <name type="scientific">Escherichia coli O81 (strain ED1a)</name>
    <dbReference type="NCBI Taxonomy" id="585397"/>
    <lineage>
        <taxon>Bacteria</taxon>
        <taxon>Pseudomonadati</taxon>
        <taxon>Pseudomonadota</taxon>
        <taxon>Gammaproteobacteria</taxon>
        <taxon>Enterobacterales</taxon>
        <taxon>Enterobacteriaceae</taxon>
        <taxon>Escherichia</taxon>
    </lineage>
</organism>
<accession>B7MV29</accession>
<reference key="1">
    <citation type="journal article" date="2009" name="PLoS Genet.">
        <title>Organised genome dynamics in the Escherichia coli species results in highly diverse adaptive paths.</title>
        <authorList>
            <person name="Touchon M."/>
            <person name="Hoede C."/>
            <person name="Tenaillon O."/>
            <person name="Barbe V."/>
            <person name="Baeriswyl S."/>
            <person name="Bidet P."/>
            <person name="Bingen E."/>
            <person name="Bonacorsi S."/>
            <person name="Bouchier C."/>
            <person name="Bouvet O."/>
            <person name="Calteau A."/>
            <person name="Chiapello H."/>
            <person name="Clermont O."/>
            <person name="Cruveiller S."/>
            <person name="Danchin A."/>
            <person name="Diard M."/>
            <person name="Dossat C."/>
            <person name="Karoui M.E."/>
            <person name="Frapy E."/>
            <person name="Garry L."/>
            <person name="Ghigo J.M."/>
            <person name="Gilles A.M."/>
            <person name="Johnson J."/>
            <person name="Le Bouguenec C."/>
            <person name="Lescat M."/>
            <person name="Mangenot S."/>
            <person name="Martinez-Jehanne V."/>
            <person name="Matic I."/>
            <person name="Nassif X."/>
            <person name="Oztas S."/>
            <person name="Petit M.A."/>
            <person name="Pichon C."/>
            <person name="Rouy Z."/>
            <person name="Ruf C.S."/>
            <person name="Schneider D."/>
            <person name="Tourret J."/>
            <person name="Vacherie B."/>
            <person name="Vallenet D."/>
            <person name="Medigue C."/>
            <person name="Rocha E.P.C."/>
            <person name="Denamur E."/>
        </authorList>
    </citation>
    <scope>NUCLEOTIDE SEQUENCE [LARGE SCALE GENOMIC DNA]</scope>
    <source>
        <strain>ED1a</strain>
    </source>
</reference>
<proteinExistence type="inferred from homology"/>
<evidence type="ECO:0000255" key="1">
    <source>
        <dbReference type="HAMAP-Rule" id="MF_01581"/>
    </source>
</evidence>
<keyword id="KW-0732">Signal</keyword>
<dbReference type="EMBL" id="CU928162">
    <property type="protein sequence ID" value="CAR07945.2"/>
    <property type="molecule type" value="Genomic_DNA"/>
</dbReference>
<dbReference type="RefSeq" id="WP_000705201.1">
    <property type="nucleotide sequence ID" value="NC_011745.1"/>
</dbReference>
<dbReference type="KEGG" id="ecq:ECED1_1751"/>
<dbReference type="HOGENOM" id="CLU_167574_0_0_6"/>
<dbReference type="Proteomes" id="UP000000748">
    <property type="component" value="Chromosome"/>
</dbReference>
<dbReference type="HAMAP" id="MF_01581">
    <property type="entry name" value="UPF0482"/>
    <property type="match status" value="1"/>
</dbReference>
<dbReference type="InterPro" id="IPR009700">
    <property type="entry name" value="DUF1283"/>
</dbReference>
<dbReference type="NCBIfam" id="NF010180">
    <property type="entry name" value="PRK13659.1"/>
    <property type="match status" value="1"/>
</dbReference>
<dbReference type="Pfam" id="PF06932">
    <property type="entry name" value="DUF1283"/>
    <property type="match status" value="1"/>
</dbReference>
<protein>
    <recommendedName>
        <fullName evidence="1">UPF0482 protein YnfB</fullName>
    </recommendedName>
</protein>
<name>YNFB_ECO81</name>
<gene>
    <name evidence="1" type="primary">ynfB</name>
    <name type="ordered locus">ECED1_1751</name>
</gene>
<feature type="signal peptide" evidence="1">
    <location>
        <begin position="1"/>
        <end position="28"/>
    </location>
</feature>
<feature type="chain" id="PRO_1000185651" description="UPF0482 protein YnfB">
    <location>
        <begin position="29"/>
        <end position="113"/>
    </location>
</feature>
<sequence>MKITLSKRIGLLAFLLPCALALSTTVHAETNKLVIESGDSAQSRQRAAMEKEQWNDTRNLRQKVNKRTEKEWDKADAAFDNRDKCEQSANINAYWEPNTLRCLDRRTGRVIIP</sequence>
<comment type="similarity">
    <text evidence="1">Belongs to the UPF0482 family.</text>
</comment>